<organism>
    <name type="scientific">Epstein-Barr virus (strain B95-8)</name>
    <name type="common">HHV-4</name>
    <name type="synonym">Human herpesvirus 4</name>
    <dbReference type="NCBI Taxonomy" id="10377"/>
    <lineage>
        <taxon>Viruses</taxon>
        <taxon>Duplodnaviria</taxon>
        <taxon>Heunggongvirae</taxon>
        <taxon>Peploviricota</taxon>
        <taxon>Herviviricetes</taxon>
        <taxon>Herpesvirales</taxon>
        <taxon>Orthoherpesviridae</taxon>
        <taxon>Gammaherpesvirinae</taxon>
        <taxon>Lymphocryptovirus</taxon>
        <taxon>Lymphocryptovirus humangamma4</taxon>
        <taxon>Epstein-Barr virus (strain GD1)</taxon>
    </lineage>
</organism>
<dbReference type="EMBL" id="V01555">
    <property type="protein sequence ID" value="CAA24820.1"/>
    <property type="molecule type" value="Genomic_DNA"/>
</dbReference>
<dbReference type="EMBL" id="AJ507799">
    <property type="protein sequence ID" value="CAD53432.1"/>
    <property type="molecule type" value="Genomic_DNA"/>
</dbReference>
<dbReference type="PIR" id="E43043">
    <property type="entry name" value="QQBE33"/>
</dbReference>
<dbReference type="RefSeq" id="YP_401682.1">
    <property type="nucleotide sequence ID" value="NC_007605.1"/>
</dbReference>
<dbReference type="PDB" id="7BQT">
    <property type="method" value="EM"/>
    <property type="resolution" value="4.80 A"/>
    <property type="chains" value="A/B/C/D/E/F/G/H/I/J/K/L=1-613"/>
</dbReference>
<dbReference type="PDBsum" id="7BQT"/>
<dbReference type="EMDB" id="EMD-30155"/>
<dbReference type="SMR" id="P03213"/>
<dbReference type="BioGRID" id="3509104">
    <property type="interactions" value="3"/>
</dbReference>
<dbReference type="DNASU" id="3783764"/>
<dbReference type="GeneID" id="3783764"/>
<dbReference type="KEGG" id="vg:3783764"/>
<dbReference type="Proteomes" id="UP000153037">
    <property type="component" value="Segment"/>
</dbReference>
<dbReference type="GO" id="GO:0030430">
    <property type="term" value="C:host cell cytoplasm"/>
    <property type="evidence" value="ECO:0007669"/>
    <property type="project" value="UniProtKB-SubCell"/>
</dbReference>
<dbReference type="GO" id="GO:0042025">
    <property type="term" value="C:host cell nucleus"/>
    <property type="evidence" value="ECO:0007669"/>
    <property type="project" value="UniProtKB-SubCell"/>
</dbReference>
<dbReference type="GO" id="GO:0044423">
    <property type="term" value="C:virion component"/>
    <property type="evidence" value="ECO:0007669"/>
    <property type="project" value="UniProtKB-KW"/>
</dbReference>
<dbReference type="GO" id="GO:0051276">
    <property type="term" value="P:chromosome organization"/>
    <property type="evidence" value="ECO:0007669"/>
    <property type="project" value="InterPro"/>
</dbReference>
<dbReference type="HAMAP" id="MF_04012">
    <property type="entry name" value="HSV_PORTL"/>
    <property type="match status" value="1"/>
</dbReference>
<dbReference type="InterPro" id="IPR002660">
    <property type="entry name" value="Herpes_Portal"/>
</dbReference>
<dbReference type="Pfam" id="PF01763">
    <property type="entry name" value="Herpes_UL6"/>
    <property type="match status" value="1"/>
</dbReference>
<proteinExistence type="evidence at protein level"/>
<feature type="chain" id="PRO_0000115912" description="Portal protein">
    <location>
        <begin position="1"/>
        <end position="613"/>
    </location>
</feature>
<feature type="region of interest" description="Disordered" evidence="2">
    <location>
        <begin position="577"/>
        <end position="613"/>
    </location>
</feature>
<feature type="compositionally biased region" description="Basic and acidic residues" evidence="2">
    <location>
        <begin position="592"/>
        <end position="605"/>
    </location>
</feature>
<evidence type="ECO:0000255" key="1">
    <source>
        <dbReference type="HAMAP-Rule" id="MF_04012"/>
    </source>
</evidence>
<evidence type="ECO:0000256" key="2">
    <source>
        <dbReference type="SAM" id="MobiDB-lite"/>
    </source>
</evidence>
<evidence type="ECO:0000269" key="3">
    <source>
    </source>
</evidence>
<evidence type="ECO:0000269" key="4">
    <source>
    </source>
</evidence>
<evidence type="ECO:0000305" key="5">
    <source>
    </source>
</evidence>
<evidence type="ECO:0000305" key="6">
    <source>
    </source>
</evidence>
<organismHost>
    <name type="scientific">Homo sapiens</name>
    <name type="common">Human</name>
    <dbReference type="NCBI Taxonomy" id="9606"/>
</organismHost>
<keyword id="KW-0002">3D-structure</keyword>
<keyword id="KW-1035">Host cytoplasm</keyword>
<keyword id="KW-1048">Host nucleus</keyword>
<keyword id="KW-1185">Reference proteome</keyword>
<keyword id="KW-0231">Viral genome packaging</keyword>
<keyword id="KW-1188">Viral release from host cell</keyword>
<keyword id="KW-0946">Virion</keyword>
<protein>
    <recommendedName>
        <fullName evidence="1">Portal protein</fullName>
    </recommendedName>
</protein>
<comment type="function">
    <text evidence="1 4 5">Forms a portal in the viral capsid through which viral DNA is translocated during DNA packaging (Probable) (PubMed:30710799). Assembles as a dodecamer at a single fivefold axe of the T=16 icosahedric capsid. Binds to the molecular motor that translocates the viral DNA, termed terminase.</text>
</comment>
<comment type="subunit">
    <text evidence="1 6">Homododecamerizes (Probable). Interacts with terminase subunits TRM1 and TRM3 (By similarity).</text>
</comment>
<comment type="subcellular location">
    <subcellularLocation>
        <location evidence="1 3">Virion</location>
    </subcellularLocation>
    <subcellularLocation>
        <location evidence="1 3">Host nucleus</location>
    </subcellularLocation>
    <subcellularLocation>
        <location evidence="4">Host cytoplasm</location>
    </subcellularLocation>
</comment>
<comment type="similarity">
    <text evidence="1">Belongs to the herpesviridae portal protein family.</text>
</comment>
<reference key="1">
    <citation type="journal article" date="1984" name="Nature">
        <title>DNA sequence and expression of the B95-8 Epstein-Barr virus genome.</title>
        <authorList>
            <person name="Baer R."/>
            <person name="Bankier A.T."/>
            <person name="Biggin M.D."/>
            <person name="Deininger P.L."/>
            <person name="Farrell P.J."/>
            <person name="Gibson T.J."/>
            <person name="Hatfull G."/>
            <person name="Hudson G.S."/>
            <person name="Satchwell S.C."/>
            <person name="Seguin C."/>
            <person name="Tuffnell P.S."/>
            <person name="Barrell B.G."/>
        </authorList>
    </citation>
    <scope>NUCLEOTIDE SEQUENCE [LARGE SCALE GENOMIC DNA]</scope>
</reference>
<reference key="2">
    <citation type="journal article" date="2003" name="Virology">
        <title>Updated Epstein-Barr virus (EBV) DNA sequence and analysis of a promoter for the BART (CST, BARF0) RNAs of EBV.</title>
        <authorList>
            <person name="de Jesus O."/>
            <person name="Smith P.R."/>
            <person name="Spender L.C."/>
            <person name="Elgueta Karstegl C."/>
            <person name="Niller H.H."/>
            <person name="Huang D."/>
            <person name="Farrell P.J."/>
        </authorList>
    </citation>
    <scope>GENOME REANNOTATION</scope>
</reference>
<reference key="3">
    <citation type="journal article" date="2004" name="Proc. Natl. Acad. Sci. U.S.A.">
        <title>Proteins of purified Epstein-Barr virus.</title>
        <authorList>
            <person name="Johannsen E."/>
            <person name="Luftig M."/>
            <person name="Chase M.R."/>
            <person name="Weicksel S."/>
            <person name="Cahir-McFarland E."/>
            <person name="Illanes D."/>
            <person name="Sarracino D."/>
            <person name="Kieff E."/>
        </authorList>
    </citation>
    <scope>SUBCELLULAR LOCATION</scope>
</reference>
<reference key="4">
    <citation type="journal article" date="2013" name="J. Virol.">
        <title>An Epstein-Barr virus mutant produces immunogenic defective particles devoid of viral DNA.</title>
        <authorList>
            <person name="Pavlova S."/>
            <person name="Feederle R."/>
            <person name="Gaertner K."/>
            <person name="Fuchs W."/>
            <person name="Granzow H."/>
            <person name="Delecluse H.J."/>
        </authorList>
    </citation>
    <scope>FUNCTION</scope>
</reference>
<reference key="5">
    <citation type="journal article" date="2019" name="Virology">
        <title>Identification of the Epstein Barr Virus portal.</title>
        <authorList>
            <person name="Visalli R.J."/>
            <person name="Schwartz A.M."/>
            <person name="Patel S."/>
            <person name="Visalli M.A."/>
        </authorList>
    </citation>
    <scope>IDENTIFICATION</scope>
    <scope>FUNCTION</scope>
    <scope>SUBCELLULAR LOCATION</scope>
    <scope>SUBUNIT</scope>
</reference>
<name>PORTL_EBVB9</name>
<gene>
    <name type="ORF">BBRF1</name>
</gene>
<sequence length="613" mass="68457">MFNMNVDESASGALGSSAIPVHPTPASVRLFEILQGKYAYVQGQTIYANLRNPGVFSRQVFTHLFKRAISHCTYDDVLHDWNKFEACIQKRWPSDDSCASRFRESTFESWSTTMKLTVRDLLTTNIYRVLHSRSVLSYERYVDWICATGMVPAVKKPITQELHSKIKSLRDRCVCRELGHERTIRSIGTELYEATKEIIESLNSTFIPQFTEVTIEYLPRSDEYVAYYCGRRIRLHVLFPPAIFAGTVTFDSPVQRLYQNIFMCYRTLEHAKICQLLNTAPLKAIVGHGGRDMYKDILAHLEQNSQRKDPKKELLNLLVKLSENKTISGVTDVVEEFITDASNNLVDRNRLFGQPGETAAQGLKKKVSNTVVKCLTDQINEQFDQINGLEKERELYLKKIRSMESQLQASLGPGGNNPAASAPAAVAAEAASVDILTGSTASAIEKLFNSPSASLGARVSGHNESILNSFVSQYIPPSREMTKDLTELWESELFNTFKLTPVVDNQGQRLYVRYSSDTISILLGPFTYLVAELSPVELVTDVYATLGIVEIIDELYRSSRLAIYIEDLGRKYCPASATGGDHGIRQAPSARGDTEPDHAKSKPARDPPPGAGS</sequence>
<accession>P03213</accession>
<accession>Q777D6</accession>